<evidence type="ECO:0000255" key="1"/>
<evidence type="ECO:0000255" key="2">
    <source>
        <dbReference type="HAMAP-Rule" id="MF_01036"/>
    </source>
</evidence>
<keyword id="KW-0963">Cytoplasm</keyword>
<keyword id="KW-0269">Exonuclease</keyword>
<keyword id="KW-0378">Hydrolase</keyword>
<keyword id="KW-0540">Nuclease</keyword>
<keyword id="KW-0694">RNA-binding</keyword>
<sequence length="644" mass="72875">MFQDNPLLAQLKQQLHTQTPRVEGVVKGTEKGFGFLEVDGQKSYFIPPPQMKKVMHGDRIIATLHTDKDREIAEPETLVEPFLSRFVGRVQRKDDRLSIVPDHPLLRDAIQCRPVRELTHSFQNGDWAVAEMCRHPLKGDRAFQADLTAFITNGEDHFVPWWVTLARHNLEREAPAMVESALNDAELEREDLTALNFVTIDSASTEDMDDALFVQDNGDGSWLLTIAIADPTAYVVENSELDLTARKRAFTNYLPGFNIPMLPRDLSDNLCSLRPNERRPVLVCRVTITEEGTLSNDIRFSAAWVESKAKLVYDDVSDWLEGNNRWQPQDTAIAEQITLLKRICDARSNWRQQHALVFKDRPDYRFLLGEKGEVLDIIVEHRRIANRIVEECMIAANVCAALALREHLGFGIYNVHTGFDPALVEQAASVLKANGVGADPQALLTLPGFCELRRHLDALPTQFLDSRIRRFQTFAEISTVPGPHFGLGLEAYATWTSPIRKYGDMVNHRLLKAMITGQQAEKPQEEITVQLAERRRLNRMAERDVGDWLYARYLQPQAGTDTRFTAEIIDITRGGLRVRLLDNGAVAFIPAPFIHAVRDEVVCSQETGTVQIKGETVYSQSDKIEVRIAEVRMETRNVIARPVA</sequence>
<protein>
    <recommendedName>
        <fullName evidence="2">Exoribonuclease 2</fullName>
        <ecNumber evidence="2">3.1.13.1</ecNumber>
    </recommendedName>
    <alternativeName>
        <fullName evidence="2">Exoribonuclease II</fullName>
        <shortName evidence="2">RNase II</shortName>
        <shortName evidence="2">Ribonuclease II</shortName>
    </alternativeName>
</protein>
<dbReference type="EC" id="3.1.13.1" evidence="2"/>
<dbReference type="EMBL" id="CP000308">
    <property type="protein sequence ID" value="ABG13561.1"/>
    <property type="molecule type" value="Genomic_DNA"/>
</dbReference>
<dbReference type="RefSeq" id="WP_002210605.1">
    <property type="nucleotide sequence ID" value="NZ_CP009906.1"/>
</dbReference>
<dbReference type="SMR" id="Q1C7L1"/>
<dbReference type="KEGG" id="ypa:YPA_1595"/>
<dbReference type="Proteomes" id="UP000001971">
    <property type="component" value="Chromosome"/>
</dbReference>
<dbReference type="GO" id="GO:0005829">
    <property type="term" value="C:cytosol"/>
    <property type="evidence" value="ECO:0007669"/>
    <property type="project" value="TreeGrafter"/>
</dbReference>
<dbReference type="GO" id="GO:0008859">
    <property type="term" value="F:exoribonuclease II activity"/>
    <property type="evidence" value="ECO:0007669"/>
    <property type="project" value="UniProtKB-UniRule"/>
</dbReference>
<dbReference type="GO" id="GO:0003723">
    <property type="term" value="F:RNA binding"/>
    <property type="evidence" value="ECO:0007669"/>
    <property type="project" value="UniProtKB-KW"/>
</dbReference>
<dbReference type="GO" id="GO:0006402">
    <property type="term" value="P:mRNA catabolic process"/>
    <property type="evidence" value="ECO:0007669"/>
    <property type="project" value="UniProtKB-UniRule"/>
</dbReference>
<dbReference type="FunFam" id="2.40.50.140:FF:000079">
    <property type="entry name" value="Exoribonuclease 2"/>
    <property type="match status" value="1"/>
</dbReference>
<dbReference type="Gene3D" id="2.40.50.640">
    <property type="match status" value="1"/>
</dbReference>
<dbReference type="Gene3D" id="2.40.50.140">
    <property type="entry name" value="Nucleic acid-binding proteins"/>
    <property type="match status" value="2"/>
</dbReference>
<dbReference type="HAMAP" id="MF_01036">
    <property type="entry name" value="RNase_II"/>
    <property type="match status" value="1"/>
</dbReference>
<dbReference type="InterPro" id="IPR011129">
    <property type="entry name" value="CSD"/>
</dbReference>
<dbReference type="InterPro" id="IPR012340">
    <property type="entry name" value="NA-bd_OB-fold"/>
</dbReference>
<dbReference type="InterPro" id="IPR013223">
    <property type="entry name" value="RNase_B_OB_dom"/>
</dbReference>
<dbReference type="InterPro" id="IPR011804">
    <property type="entry name" value="RNase_II"/>
</dbReference>
<dbReference type="InterPro" id="IPR001900">
    <property type="entry name" value="RNase_II/R"/>
</dbReference>
<dbReference type="InterPro" id="IPR022966">
    <property type="entry name" value="RNase_II/R_CS"/>
</dbReference>
<dbReference type="InterPro" id="IPR004476">
    <property type="entry name" value="RNase_II/RNase_R"/>
</dbReference>
<dbReference type="InterPro" id="IPR050180">
    <property type="entry name" value="RNR_Ribonuclease"/>
</dbReference>
<dbReference type="InterPro" id="IPR003029">
    <property type="entry name" value="S1_domain"/>
</dbReference>
<dbReference type="NCBIfam" id="TIGR00358">
    <property type="entry name" value="3_prime_RNase"/>
    <property type="match status" value="1"/>
</dbReference>
<dbReference type="NCBIfam" id="NF003455">
    <property type="entry name" value="PRK05054.1"/>
    <property type="match status" value="1"/>
</dbReference>
<dbReference type="NCBIfam" id="TIGR02062">
    <property type="entry name" value="RNase_B"/>
    <property type="match status" value="1"/>
</dbReference>
<dbReference type="PANTHER" id="PTHR23355:SF37">
    <property type="entry name" value="EXORIBONUCLEASE 2"/>
    <property type="match status" value="1"/>
</dbReference>
<dbReference type="PANTHER" id="PTHR23355">
    <property type="entry name" value="RIBONUCLEASE"/>
    <property type="match status" value="1"/>
</dbReference>
<dbReference type="Pfam" id="PF08206">
    <property type="entry name" value="OB_RNB"/>
    <property type="match status" value="1"/>
</dbReference>
<dbReference type="Pfam" id="PF00773">
    <property type="entry name" value="RNB"/>
    <property type="match status" value="1"/>
</dbReference>
<dbReference type="Pfam" id="PF00575">
    <property type="entry name" value="S1"/>
    <property type="match status" value="1"/>
</dbReference>
<dbReference type="SMART" id="SM00357">
    <property type="entry name" value="CSP"/>
    <property type="match status" value="1"/>
</dbReference>
<dbReference type="SMART" id="SM00955">
    <property type="entry name" value="RNB"/>
    <property type="match status" value="1"/>
</dbReference>
<dbReference type="SUPFAM" id="SSF50249">
    <property type="entry name" value="Nucleic acid-binding proteins"/>
    <property type="match status" value="4"/>
</dbReference>
<dbReference type="PROSITE" id="PS01175">
    <property type="entry name" value="RIBONUCLEASE_II"/>
    <property type="match status" value="1"/>
</dbReference>
<organism>
    <name type="scientific">Yersinia pestis bv. Antiqua (strain Antiqua)</name>
    <dbReference type="NCBI Taxonomy" id="360102"/>
    <lineage>
        <taxon>Bacteria</taxon>
        <taxon>Pseudomonadati</taxon>
        <taxon>Pseudomonadota</taxon>
        <taxon>Gammaproteobacteria</taxon>
        <taxon>Enterobacterales</taxon>
        <taxon>Yersiniaceae</taxon>
        <taxon>Yersinia</taxon>
    </lineage>
</organism>
<name>RNB_YERPA</name>
<gene>
    <name evidence="2" type="primary">rnb</name>
    <name type="ordered locus">YPA_1595</name>
</gene>
<feature type="chain" id="PRO_1000063905" description="Exoribonuclease 2">
    <location>
        <begin position="1"/>
        <end position="644"/>
    </location>
</feature>
<feature type="domain" description="RNB" evidence="1">
    <location>
        <begin position="189"/>
        <end position="516"/>
    </location>
</feature>
<feature type="domain" description="S1 motif" evidence="2">
    <location>
        <begin position="561"/>
        <end position="643"/>
    </location>
</feature>
<reference key="1">
    <citation type="journal article" date="2006" name="J. Bacteriol.">
        <title>Complete genome sequence of Yersinia pestis strains Antiqua and Nepal516: evidence of gene reduction in an emerging pathogen.</title>
        <authorList>
            <person name="Chain P.S.G."/>
            <person name="Hu P."/>
            <person name="Malfatti S.A."/>
            <person name="Radnedge L."/>
            <person name="Larimer F."/>
            <person name="Vergez L.M."/>
            <person name="Worsham P."/>
            <person name="Chu M.C."/>
            <person name="Andersen G.L."/>
        </authorList>
    </citation>
    <scope>NUCLEOTIDE SEQUENCE [LARGE SCALE GENOMIC DNA]</scope>
    <source>
        <strain>Antiqua</strain>
    </source>
</reference>
<accession>Q1C7L1</accession>
<comment type="function">
    <text evidence="2">Involved in mRNA degradation. Hydrolyzes single-stranded polyribonucleotides processively in the 3' to 5' direction.</text>
</comment>
<comment type="catalytic activity">
    <reaction evidence="2">
        <text>Exonucleolytic cleavage in the 3'- to 5'-direction to yield nucleoside 5'-phosphates.</text>
        <dbReference type="EC" id="3.1.13.1"/>
    </reaction>
</comment>
<comment type="subcellular location">
    <subcellularLocation>
        <location evidence="2">Cytoplasm</location>
    </subcellularLocation>
</comment>
<comment type="similarity">
    <text evidence="2">Belongs to the RNR ribonuclease family. RNase II subfamily.</text>
</comment>
<proteinExistence type="inferred from homology"/>